<proteinExistence type="inferred from homology"/>
<feature type="chain" id="PRO_0000111424" description="Small ribosomal subunit protein uS9">
    <location>
        <begin position="1"/>
        <end position="130"/>
    </location>
</feature>
<accession>Q5X9X4</accession>
<gene>
    <name evidence="1" type="primary">rpsI</name>
    <name type="ordered locus">M6_Spy1654</name>
</gene>
<name>RS9_STRP6</name>
<sequence>MAQAQYAGTGRRKNAVARVRLVPGTGKITVNKKDVEEYIPHADLRLIINQPFAVTSTEGSYDVFVNVVGGGYGGQSGAIRHGIARALLQVDPDFRDSLKRAGLLTRDARMVERKKPGLKKARKASQFSKR</sequence>
<reference key="1">
    <citation type="journal article" date="2004" name="J. Infect. Dis.">
        <title>Progress toward characterization of the group A Streptococcus metagenome: complete genome sequence of a macrolide-resistant serotype M6 strain.</title>
        <authorList>
            <person name="Banks D.J."/>
            <person name="Porcella S.F."/>
            <person name="Barbian K.D."/>
            <person name="Beres S.B."/>
            <person name="Philips L.E."/>
            <person name="Voyich J.M."/>
            <person name="DeLeo F.R."/>
            <person name="Martin J.M."/>
            <person name="Somerville G.A."/>
            <person name="Musser J.M."/>
        </authorList>
    </citation>
    <scope>NUCLEOTIDE SEQUENCE [LARGE SCALE GENOMIC DNA]</scope>
    <source>
        <strain>ATCC BAA-946 / MGAS10394</strain>
    </source>
</reference>
<organism>
    <name type="scientific">Streptococcus pyogenes serotype M6 (strain ATCC BAA-946 / MGAS10394)</name>
    <dbReference type="NCBI Taxonomy" id="286636"/>
    <lineage>
        <taxon>Bacteria</taxon>
        <taxon>Bacillati</taxon>
        <taxon>Bacillota</taxon>
        <taxon>Bacilli</taxon>
        <taxon>Lactobacillales</taxon>
        <taxon>Streptococcaceae</taxon>
        <taxon>Streptococcus</taxon>
    </lineage>
</organism>
<dbReference type="EMBL" id="CP000003">
    <property type="protein sequence ID" value="AAT87789.1"/>
    <property type="molecule type" value="Genomic_DNA"/>
</dbReference>
<dbReference type="RefSeq" id="WP_002982716.1">
    <property type="nucleotide sequence ID" value="NC_006086.1"/>
</dbReference>
<dbReference type="SMR" id="Q5X9X4"/>
<dbReference type="GeneID" id="83689365"/>
<dbReference type="KEGG" id="spa:M6_Spy1654"/>
<dbReference type="HOGENOM" id="CLU_046483_2_1_9"/>
<dbReference type="Proteomes" id="UP000001167">
    <property type="component" value="Chromosome"/>
</dbReference>
<dbReference type="GO" id="GO:0022627">
    <property type="term" value="C:cytosolic small ribosomal subunit"/>
    <property type="evidence" value="ECO:0007669"/>
    <property type="project" value="TreeGrafter"/>
</dbReference>
<dbReference type="GO" id="GO:0003723">
    <property type="term" value="F:RNA binding"/>
    <property type="evidence" value="ECO:0007669"/>
    <property type="project" value="TreeGrafter"/>
</dbReference>
<dbReference type="GO" id="GO:0003735">
    <property type="term" value="F:structural constituent of ribosome"/>
    <property type="evidence" value="ECO:0007669"/>
    <property type="project" value="InterPro"/>
</dbReference>
<dbReference type="GO" id="GO:0006412">
    <property type="term" value="P:translation"/>
    <property type="evidence" value="ECO:0007669"/>
    <property type="project" value="UniProtKB-UniRule"/>
</dbReference>
<dbReference type="FunFam" id="3.30.230.10:FF:000001">
    <property type="entry name" value="30S ribosomal protein S9"/>
    <property type="match status" value="1"/>
</dbReference>
<dbReference type="Gene3D" id="3.30.230.10">
    <property type="match status" value="1"/>
</dbReference>
<dbReference type="HAMAP" id="MF_00532_B">
    <property type="entry name" value="Ribosomal_uS9_B"/>
    <property type="match status" value="1"/>
</dbReference>
<dbReference type="InterPro" id="IPR020568">
    <property type="entry name" value="Ribosomal_Su5_D2-typ_SF"/>
</dbReference>
<dbReference type="InterPro" id="IPR000754">
    <property type="entry name" value="Ribosomal_uS9"/>
</dbReference>
<dbReference type="InterPro" id="IPR023035">
    <property type="entry name" value="Ribosomal_uS9_bac/plastid"/>
</dbReference>
<dbReference type="InterPro" id="IPR020574">
    <property type="entry name" value="Ribosomal_uS9_CS"/>
</dbReference>
<dbReference type="InterPro" id="IPR014721">
    <property type="entry name" value="Ribsml_uS5_D2-typ_fold_subgr"/>
</dbReference>
<dbReference type="NCBIfam" id="NF001099">
    <property type="entry name" value="PRK00132.1"/>
    <property type="match status" value="1"/>
</dbReference>
<dbReference type="PANTHER" id="PTHR21569">
    <property type="entry name" value="RIBOSOMAL PROTEIN S9"/>
    <property type="match status" value="1"/>
</dbReference>
<dbReference type="PANTHER" id="PTHR21569:SF1">
    <property type="entry name" value="SMALL RIBOSOMAL SUBUNIT PROTEIN US9M"/>
    <property type="match status" value="1"/>
</dbReference>
<dbReference type="Pfam" id="PF00380">
    <property type="entry name" value="Ribosomal_S9"/>
    <property type="match status" value="1"/>
</dbReference>
<dbReference type="SUPFAM" id="SSF54211">
    <property type="entry name" value="Ribosomal protein S5 domain 2-like"/>
    <property type="match status" value="1"/>
</dbReference>
<dbReference type="PROSITE" id="PS00360">
    <property type="entry name" value="RIBOSOMAL_S9"/>
    <property type="match status" value="1"/>
</dbReference>
<keyword id="KW-0687">Ribonucleoprotein</keyword>
<keyword id="KW-0689">Ribosomal protein</keyword>
<comment type="similarity">
    <text evidence="1">Belongs to the universal ribosomal protein uS9 family.</text>
</comment>
<protein>
    <recommendedName>
        <fullName evidence="1">Small ribosomal subunit protein uS9</fullName>
    </recommendedName>
    <alternativeName>
        <fullName evidence="2">30S ribosomal protein S9</fullName>
    </alternativeName>
</protein>
<evidence type="ECO:0000255" key="1">
    <source>
        <dbReference type="HAMAP-Rule" id="MF_00532"/>
    </source>
</evidence>
<evidence type="ECO:0000305" key="2"/>